<gene>
    <name evidence="1" type="primary">MT-ND3</name>
    <name type="synonym">MTND3</name>
    <name type="synonym">NADH3</name>
    <name type="synonym">ND3</name>
</gene>
<organism>
    <name type="scientific">Canis lupus</name>
    <name type="common">Gray wolf</name>
    <dbReference type="NCBI Taxonomy" id="9612"/>
    <lineage>
        <taxon>Eukaryota</taxon>
        <taxon>Metazoa</taxon>
        <taxon>Chordata</taxon>
        <taxon>Craniata</taxon>
        <taxon>Vertebrata</taxon>
        <taxon>Euteleostomi</taxon>
        <taxon>Mammalia</taxon>
        <taxon>Eutheria</taxon>
        <taxon>Laurasiatheria</taxon>
        <taxon>Carnivora</taxon>
        <taxon>Caniformia</taxon>
        <taxon>Canidae</taxon>
        <taxon>Canis</taxon>
    </lineage>
</organism>
<protein>
    <recommendedName>
        <fullName evidence="1">NADH-ubiquinone oxidoreductase chain 3</fullName>
        <ecNumber evidence="1">7.1.1.2</ecNumber>
    </recommendedName>
    <alternativeName>
        <fullName>NADH dehydrogenase subunit 3</fullName>
    </alternativeName>
</protein>
<keyword id="KW-0249">Electron transport</keyword>
<keyword id="KW-0472">Membrane</keyword>
<keyword id="KW-0496">Mitochondrion</keyword>
<keyword id="KW-0999">Mitochondrion inner membrane</keyword>
<keyword id="KW-0520">NAD</keyword>
<keyword id="KW-0679">Respiratory chain</keyword>
<keyword id="KW-1278">Translocase</keyword>
<keyword id="KW-0812">Transmembrane</keyword>
<keyword id="KW-1133">Transmembrane helix</keyword>
<keyword id="KW-0813">Transport</keyword>
<keyword id="KW-0830">Ubiquinone</keyword>
<feature type="chain" id="PRO_0000269895" description="NADH-ubiquinone oxidoreductase chain 3">
    <location>
        <begin position="1"/>
        <end position="115"/>
    </location>
</feature>
<feature type="transmembrane region" description="Helical" evidence="3">
    <location>
        <begin position="3"/>
        <end position="23"/>
    </location>
</feature>
<feature type="transmembrane region" description="Helical" evidence="3">
    <location>
        <begin position="55"/>
        <end position="75"/>
    </location>
</feature>
<feature type="transmembrane region" description="Helical" evidence="3">
    <location>
        <begin position="84"/>
        <end position="104"/>
    </location>
</feature>
<comment type="function">
    <text evidence="1">Core subunit of the mitochondrial membrane respiratory chain NADH dehydrogenase (Complex I) which catalyzes electron transfer from NADH through the respiratory chain, using ubiquinone as an electron acceptor. Essential for the catalytic activity of complex I.</text>
</comment>
<comment type="catalytic activity">
    <reaction evidence="1">
        <text>a ubiquinone + NADH + 5 H(+)(in) = a ubiquinol + NAD(+) + 4 H(+)(out)</text>
        <dbReference type="Rhea" id="RHEA:29091"/>
        <dbReference type="Rhea" id="RHEA-COMP:9565"/>
        <dbReference type="Rhea" id="RHEA-COMP:9566"/>
        <dbReference type="ChEBI" id="CHEBI:15378"/>
        <dbReference type="ChEBI" id="CHEBI:16389"/>
        <dbReference type="ChEBI" id="CHEBI:17976"/>
        <dbReference type="ChEBI" id="CHEBI:57540"/>
        <dbReference type="ChEBI" id="CHEBI:57945"/>
        <dbReference type="EC" id="7.1.1.2"/>
    </reaction>
</comment>
<comment type="subunit">
    <text evidence="1">Core subunit of respiratory chain NADH dehydrogenase (Complex I) which is composed of 45 different subunits. Interacts with TMEM186. Interacts with TMEM242 (By similarity).</text>
</comment>
<comment type="subcellular location">
    <subcellularLocation>
        <location evidence="2">Mitochondrion inner membrane</location>
        <topology evidence="3">Multi-pass membrane protein</topology>
    </subcellularLocation>
</comment>
<comment type="similarity">
    <text evidence="4">Belongs to the complex I subunit 3 family.</text>
</comment>
<reference key="1">
    <citation type="journal article" date="2005" name="Mol. Phylogenet. Evol.">
        <title>A phylogeny of the Caniformia (order Carnivora) based on 12 complete protein-coding mitochondrial genes.</title>
        <authorList>
            <person name="Delisle I."/>
            <person name="Strobeck C."/>
        </authorList>
    </citation>
    <scope>NUCLEOTIDE SEQUENCE [GENOMIC DNA]</scope>
</reference>
<reference key="2">
    <citation type="journal article" date="2006" name="Genome Res.">
        <title>Relaxation of selective constraint on dog mitochondrial DNA following domestication.</title>
        <authorList>
            <person name="Bjornerfeldt S."/>
            <person name="Webster M.T."/>
            <person name="Vila C."/>
        </authorList>
    </citation>
    <scope>NUCLEOTIDE SEQUENCE [GENOMIC DNA]</scope>
</reference>
<dbReference type="EC" id="7.1.1.2" evidence="1"/>
<dbReference type="EMBL" id="AY598502">
    <property type="protein sequence ID" value="AAU00448.1"/>
    <property type="molecule type" value="Genomic_DNA"/>
</dbReference>
<dbReference type="EMBL" id="DQ480503">
    <property type="protein sequence ID" value="ABE48162.1"/>
    <property type="molecule type" value="Genomic_DNA"/>
</dbReference>
<dbReference type="EMBL" id="DQ480504">
    <property type="protein sequence ID" value="ABE48175.1"/>
    <property type="molecule type" value="Genomic_DNA"/>
</dbReference>
<dbReference type="EMBL" id="DQ480505">
    <property type="protein sequence ID" value="ABE48188.1"/>
    <property type="molecule type" value="Genomic_DNA"/>
</dbReference>
<dbReference type="EMBL" id="DQ480506">
    <property type="protein sequence ID" value="ABE48201.1"/>
    <property type="molecule type" value="Genomic_DNA"/>
</dbReference>
<dbReference type="EMBL" id="DQ480507">
    <property type="protein sequence ID" value="ABE48214.1"/>
    <property type="molecule type" value="Genomic_DNA"/>
</dbReference>
<dbReference type="EMBL" id="DQ480508">
    <property type="protein sequence ID" value="ABE48227.1"/>
    <property type="molecule type" value="Genomic_DNA"/>
</dbReference>
<dbReference type="RefSeq" id="YP_626735.1">
    <property type="nucleotide sequence ID" value="NC_008092.1"/>
</dbReference>
<dbReference type="SMR" id="Q3L6Y6"/>
<dbReference type="GeneID" id="4097771"/>
<dbReference type="CTD" id="4537"/>
<dbReference type="GO" id="GO:0005743">
    <property type="term" value="C:mitochondrial inner membrane"/>
    <property type="evidence" value="ECO:0000250"/>
    <property type="project" value="UniProtKB"/>
</dbReference>
<dbReference type="GO" id="GO:0030964">
    <property type="term" value="C:NADH dehydrogenase complex"/>
    <property type="evidence" value="ECO:0007669"/>
    <property type="project" value="TreeGrafter"/>
</dbReference>
<dbReference type="GO" id="GO:0008137">
    <property type="term" value="F:NADH dehydrogenase (ubiquinone) activity"/>
    <property type="evidence" value="ECO:0000250"/>
    <property type="project" value="UniProtKB"/>
</dbReference>
<dbReference type="GO" id="GO:0006120">
    <property type="term" value="P:mitochondrial electron transport, NADH to ubiquinone"/>
    <property type="evidence" value="ECO:0000250"/>
    <property type="project" value="UniProtKB"/>
</dbReference>
<dbReference type="FunFam" id="1.20.58.1610:FF:000004">
    <property type="entry name" value="NADH-quinone oxidoreductase subunit A"/>
    <property type="match status" value="1"/>
</dbReference>
<dbReference type="Gene3D" id="1.20.58.1610">
    <property type="entry name" value="NADH:ubiquinone/plastoquinone oxidoreductase, chain 3"/>
    <property type="match status" value="1"/>
</dbReference>
<dbReference type="InterPro" id="IPR000440">
    <property type="entry name" value="NADH_UbQ/plastoQ_OxRdtase_su3"/>
</dbReference>
<dbReference type="InterPro" id="IPR038430">
    <property type="entry name" value="NDAH_ubi_oxred_su3_sf"/>
</dbReference>
<dbReference type="PANTHER" id="PTHR11058">
    <property type="entry name" value="NADH-UBIQUINONE OXIDOREDUCTASE CHAIN 3"/>
    <property type="match status" value="1"/>
</dbReference>
<dbReference type="PANTHER" id="PTHR11058:SF9">
    <property type="entry name" value="NADH-UBIQUINONE OXIDOREDUCTASE CHAIN 3"/>
    <property type="match status" value="1"/>
</dbReference>
<dbReference type="Pfam" id="PF00507">
    <property type="entry name" value="Oxidored_q4"/>
    <property type="match status" value="1"/>
</dbReference>
<accession>Q3L6Y6</accession>
<geneLocation type="mitochondrion"/>
<proteinExistence type="inferred from homology"/>
<evidence type="ECO:0000250" key="1">
    <source>
        <dbReference type="UniProtKB" id="P03897"/>
    </source>
</evidence>
<evidence type="ECO:0000250" key="2">
    <source>
        <dbReference type="UniProtKB" id="P03898"/>
    </source>
</evidence>
<evidence type="ECO:0000255" key="3"/>
<evidence type="ECO:0000305" key="4"/>
<name>NU3M_CANLU</name>
<sequence>MNVMLTLMTNVTLASLLVLIAFWLPQLNIYTDKTSPYECGFDPMGSARLPFSMKFFLVAITFLLFDLEIALLLPLPWASQTNKLTTMLIMALLLISLLAASLAYEWTEKGLEWTE</sequence>